<keyword id="KW-0067">ATP-binding</keyword>
<keyword id="KW-0378">Hydrolase</keyword>
<keyword id="KW-0460">Magnesium</keyword>
<keyword id="KW-0479">Metal-binding</keyword>
<keyword id="KW-0511">Multifunctional enzyme</keyword>
<keyword id="KW-0533">Nickel</keyword>
<keyword id="KW-0547">Nucleotide-binding</keyword>
<keyword id="KW-0548">Nucleotidyltransferase</keyword>
<keyword id="KW-1185">Reference proteome</keyword>
<keyword id="KW-0692">RNA repair</keyword>
<keyword id="KW-0694">RNA-binding</keyword>
<keyword id="KW-0808">Transferase</keyword>
<keyword id="KW-0819">tRNA processing</keyword>
<name>CCA_HAHCH</name>
<proteinExistence type="inferred from homology"/>
<organism>
    <name type="scientific">Hahella chejuensis (strain KCTC 2396)</name>
    <dbReference type="NCBI Taxonomy" id="349521"/>
    <lineage>
        <taxon>Bacteria</taxon>
        <taxon>Pseudomonadati</taxon>
        <taxon>Pseudomonadota</taxon>
        <taxon>Gammaproteobacteria</taxon>
        <taxon>Oceanospirillales</taxon>
        <taxon>Hahellaceae</taxon>
        <taxon>Hahella</taxon>
    </lineage>
</organism>
<dbReference type="EC" id="2.7.7.72" evidence="1"/>
<dbReference type="EC" id="3.1.3.-" evidence="1"/>
<dbReference type="EC" id="3.1.4.-" evidence="1"/>
<dbReference type="EMBL" id="CP000155">
    <property type="protein sequence ID" value="ABC28230.1"/>
    <property type="molecule type" value="Genomic_DNA"/>
</dbReference>
<dbReference type="RefSeq" id="WP_011395303.1">
    <property type="nucleotide sequence ID" value="NC_007645.1"/>
</dbReference>
<dbReference type="SMR" id="Q2SM94"/>
<dbReference type="STRING" id="349521.HCH_01366"/>
<dbReference type="KEGG" id="hch:HCH_01366"/>
<dbReference type="eggNOG" id="COG0617">
    <property type="taxonomic scope" value="Bacteria"/>
</dbReference>
<dbReference type="HOGENOM" id="CLU_015961_1_1_6"/>
<dbReference type="OrthoDB" id="9805698at2"/>
<dbReference type="Proteomes" id="UP000000238">
    <property type="component" value="Chromosome"/>
</dbReference>
<dbReference type="GO" id="GO:0005524">
    <property type="term" value="F:ATP binding"/>
    <property type="evidence" value="ECO:0007669"/>
    <property type="project" value="UniProtKB-UniRule"/>
</dbReference>
<dbReference type="GO" id="GO:0004810">
    <property type="term" value="F:CCA tRNA nucleotidyltransferase activity"/>
    <property type="evidence" value="ECO:0007669"/>
    <property type="project" value="UniProtKB-UniRule"/>
</dbReference>
<dbReference type="GO" id="GO:0004112">
    <property type="term" value="F:cyclic-nucleotide phosphodiesterase activity"/>
    <property type="evidence" value="ECO:0007669"/>
    <property type="project" value="UniProtKB-UniRule"/>
</dbReference>
<dbReference type="GO" id="GO:0000287">
    <property type="term" value="F:magnesium ion binding"/>
    <property type="evidence" value="ECO:0007669"/>
    <property type="project" value="UniProtKB-UniRule"/>
</dbReference>
<dbReference type="GO" id="GO:0016791">
    <property type="term" value="F:phosphatase activity"/>
    <property type="evidence" value="ECO:0007669"/>
    <property type="project" value="UniProtKB-UniRule"/>
</dbReference>
<dbReference type="GO" id="GO:0000049">
    <property type="term" value="F:tRNA binding"/>
    <property type="evidence" value="ECO:0007669"/>
    <property type="project" value="UniProtKB-UniRule"/>
</dbReference>
<dbReference type="GO" id="GO:0042245">
    <property type="term" value="P:RNA repair"/>
    <property type="evidence" value="ECO:0007669"/>
    <property type="project" value="UniProtKB-KW"/>
</dbReference>
<dbReference type="GO" id="GO:0001680">
    <property type="term" value="P:tRNA 3'-terminal CCA addition"/>
    <property type="evidence" value="ECO:0007669"/>
    <property type="project" value="UniProtKB-UniRule"/>
</dbReference>
<dbReference type="CDD" id="cd00077">
    <property type="entry name" value="HDc"/>
    <property type="match status" value="1"/>
</dbReference>
<dbReference type="CDD" id="cd05398">
    <property type="entry name" value="NT_ClassII-CCAase"/>
    <property type="match status" value="1"/>
</dbReference>
<dbReference type="Gene3D" id="3.30.460.10">
    <property type="entry name" value="Beta Polymerase, domain 2"/>
    <property type="match status" value="1"/>
</dbReference>
<dbReference type="Gene3D" id="1.10.3090.10">
    <property type="entry name" value="cca-adding enzyme, domain 2"/>
    <property type="match status" value="1"/>
</dbReference>
<dbReference type="HAMAP" id="MF_01261">
    <property type="entry name" value="CCA_bact_type1"/>
    <property type="match status" value="1"/>
</dbReference>
<dbReference type="HAMAP" id="MF_01262">
    <property type="entry name" value="CCA_bact_type2"/>
    <property type="match status" value="1"/>
</dbReference>
<dbReference type="InterPro" id="IPR012006">
    <property type="entry name" value="CCA_bact"/>
</dbReference>
<dbReference type="InterPro" id="IPR003607">
    <property type="entry name" value="HD/PDEase_dom"/>
</dbReference>
<dbReference type="InterPro" id="IPR006674">
    <property type="entry name" value="HD_domain"/>
</dbReference>
<dbReference type="InterPro" id="IPR043519">
    <property type="entry name" value="NT_sf"/>
</dbReference>
<dbReference type="InterPro" id="IPR002646">
    <property type="entry name" value="PolA_pol_head_dom"/>
</dbReference>
<dbReference type="InterPro" id="IPR032828">
    <property type="entry name" value="PolyA_RNA-bd"/>
</dbReference>
<dbReference type="InterPro" id="IPR050124">
    <property type="entry name" value="tRNA_CCA-adding_enzyme"/>
</dbReference>
<dbReference type="NCBIfam" id="NF008137">
    <property type="entry name" value="PRK10885.1"/>
    <property type="match status" value="1"/>
</dbReference>
<dbReference type="PANTHER" id="PTHR47545">
    <property type="entry name" value="MULTIFUNCTIONAL CCA PROTEIN"/>
    <property type="match status" value="1"/>
</dbReference>
<dbReference type="PANTHER" id="PTHR47545:SF1">
    <property type="entry name" value="MULTIFUNCTIONAL CCA PROTEIN"/>
    <property type="match status" value="1"/>
</dbReference>
<dbReference type="Pfam" id="PF01966">
    <property type="entry name" value="HD"/>
    <property type="match status" value="1"/>
</dbReference>
<dbReference type="Pfam" id="PF01743">
    <property type="entry name" value="PolyA_pol"/>
    <property type="match status" value="1"/>
</dbReference>
<dbReference type="Pfam" id="PF12627">
    <property type="entry name" value="PolyA_pol_RNAbd"/>
    <property type="match status" value="1"/>
</dbReference>
<dbReference type="PIRSF" id="PIRSF000813">
    <property type="entry name" value="CCA_bact"/>
    <property type="match status" value="1"/>
</dbReference>
<dbReference type="SUPFAM" id="SSF81301">
    <property type="entry name" value="Nucleotidyltransferase"/>
    <property type="match status" value="1"/>
</dbReference>
<dbReference type="SUPFAM" id="SSF81891">
    <property type="entry name" value="Poly A polymerase C-terminal region-like"/>
    <property type="match status" value="1"/>
</dbReference>
<dbReference type="PROSITE" id="PS51831">
    <property type="entry name" value="HD"/>
    <property type="match status" value="1"/>
</dbReference>
<sequence length="422" mass="47649">MQRYLVGGAVRDALLGLPVKDRDWVVVGATPEQMLDQGYQQVGADFPVFLHPESKEEHALARTERKSGKGYTGFICDFSPDISLEDDLLRRDLTINAMAMDDDGNLVDPFNGRQDLEARILRHVSPAFTEDPLRVLRVARFASRYADLGFTVAPETLQLMQDIQASGELKALTAERVWQETVRALGQKQPRVYFQVLKDAHALQDIFPELNALFGVPQTPQYHPEVDTGLHSLMALEQACLLSEREEVRFAALIHDLGKGVTPQEEWPKHHNHEAVGVDLVKALTERVKAPKLFKELALMACQYHTHCHRALELRANTLVKLLQSCDAWRRPDRFELFLLACEADARGRTGWEQKPYPQADFLRGVLETCQQIQPQELVAQGYTGARLGEEIQRRRISAVKRFKQDNAPEAQEKGGEDVGLT</sequence>
<gene>
    <name evidence="1" type="primary">cca</name>
    <name type="ordered locus">HCH_01366</name>
</gene>
<feature type="chain" id="PRO_1000054268" description="Multifunctional CCA protein">
    <location>
        <begin position="1"/>
        <end position="422"/>
    </location>
</feature>
<feature type="domain" description="HD" evidence="1">
    <location>
        <begin position="228"/>
        <end position="329"/>
    </location>
</feature>
<feature type="region of interest" description="Disordered" evidence="2">
    <location>
        <begin position="403"/>
        <end position="422"/>
    </location>
</feature>
<feature type="binding site" evidence="1">
    <location>
        <position position="8"/>
    </location>
    <ligand>
        <name>ATP</name>
        <dbReference type="ChEBI" id="CHEBI:30616"/>
    </ligand>
</feature>
<feature type="binding site" evidence="1">
    <location>
        <position position="8"/>
    </location>
    <ligand>
        <name>CTP</name>
        <dbReference type="ChEBI" id="CHEBI:37563"/>
    </ligand>
</feature>
<feature type="binding site" evidence="1">
    <location>
        <position position="11"/>
    </location>
    <ligand>
        <name>ATP</name>
        <dbReference type="ChEBI" id="CHEBI:30616"/>
    </ligand>
</feature>
<feature type="binding site" evidence="1">
    <location>
        <position position="11"/>
    </location>
    <ligand>
        <name>CTP</name>
        <dbReference type="ChEBI" id="CHEBI:37563"/>
    </ligand>
</feature>
<feature type="binding site" evidence="1">
    <location>
        <position position="21"/>
    </location>
    <ligand>
        <name>Mg(2+)</name>
        <dbReference type="ChEBI" id="CHEBI:18420"/>
    </ligand>
</feature>
<feature type="binding site" evidence="1">
    <location>
        <position position="23"/>
    </location>
    <ligand>
        <name>Mg(2+)</name>
        <dbReference type="ChEBI" id="CHEBI:18420"/>
    </ligand>
</feature>
<feature type="binding site" evidence="1">
    <location>
        <position position="91"/>
    </location>
    <ligand>
        <name>ATP</name>
        <dbReference type="ChEBI" id="CHEBI:30616"/>
    </ligand>
</feature>
<feature type="binding site" evidence="1">
    <location>
        <position position="91"/>
    </location>
    <ligand>
        <name>CTP</name>
        <dbReference type="ChEBI" id="CHEBI:37563"/>
    </ligand>
</feature>
<feature type="binding site" evidence="1">
    <location>
        <position position="137"/>
    </location>
    <ligand>
        <name>ATP</name>
        <dbReference type="ChEBI" id="CHEBI:30616"/>
    </ligand>
</feature>
<feature type="binding site" evidence="1">
    <location>
        <position position="137"/>
    </location>
    <ligand>
        <name>CTP</name>
        <dbReference type="ChEBI" id="CHEBI:37563"/>
    </ligand>
</feature>
<feature type="binding site" evidence="1">
    <location>
        <position position="140"/>
    </location>
    <ligand>
        <name>ATP</name>
        <dbReference type="ChEBI" id="CHEBI:30616"/>
    </ligand>
</feature>
<feature type="binding site" evidence="1">
    <location>
        <position position="140"/>
    </location>
    <ligand>
        <name>CTP</name>
        <dbReference type="ChEBI" id="CHEBI:37563"/>
    </ligand>
</feature>
<accession>Q2SM94</accession>
<comment type="function">
    <text evidence="1">Catalyzes the addition and repair of the essential 3'-terminal CCA sequence in tRNAs without using a nucleic acid template. Adds these three nucleotides in the order of C, C, and A to the tRNA nucleotide-73, using CTP and ATP as substrates and producing inorganic pyrophosphate. tRNA 3'-terminal CCA addition is required both for tRNA processing and repair. Also involved in tRNA surveillance by mediating tandem CCA addition to generate a CCACCA at the 3' terminus of unstable tRNAs. While stable tRNAs receive only 3'-terminal CCA, unstable tRNAs are marked with CCACCA and rapidly degraded.</text>
</comment>
<comment type="catalytic activity">
    <reaction evidence="1">
        <text>a tRNA precursor + 2 CTP + ATP = a tRNA with a 3' CCA end + 3 diphosphate</text>
        <dbReference type="Rhea" id="RHEA:14433"/>
        <dbReference type="Rhea" id="RHEA-COMP:10465"/>
        <dbReference type="Rhea" id="RHEA-COMP:10468"/>
        <dbReference type="ChEBI" id="CHEBI:30616"/>
        <dbReference type="ChEBI" id="CHEBI:33019"/>
        <dbReference type="ChEBI" id="CHEBI:37563"/>
        <dbReference type="ChEBI" id="CHEBI:74896"/>
        <dbReference type="ChEBI" id="CHEBI:83071"/>
        <dbReference type="EC" id="2.7.7.72"/>
    </reaction>
</comment>
<comment type="catalytic activity">
    <reaction evidence="1">
        <text>a tRNA with a 3' CCA end + 2 CTP + ATP = a tRNA with a 3' CCACCA end + 3 diphosphate</text>
        <dbReference type="Rhea" id="RHEA:76235"/>
        <dbReference type="Rhea" id="RHEA-COMP:10468"/>
        <dbReference type="Rhea" id="RHEA-COMP:18655"/>
        <dbReference type="ChEBI" id="CHEBI:30616"/>
        <dbReference type="ChEBI" id="CHEBI:33019"/>
        <dbReference type="ChEBI" id="CHEBI:37563"/>
        <dbReference type="ChEBI" id="CHEBI:83071"/>
        <dbReference type="ChEBI" id="CHEBI:195187"/>
    </reaction>
    <physiologicalReaction direction="left-to-right" evidence="1">
        <dbReference type="Rhea" id="RHEA:76236"/>
    </physiologicalReaction>
</comment>
<comment type="cofactor">
    <cofactor evidence="1">
        <name>Mg(2+)</name>
        <dbReference type="ChEBI" id="CHEBI:18420"/>
    </cofactor>
    <text evidence="1">Magnesium is required for nucleotidyltransferase activity.</text>
</comment>
<comment type="cofactor">
    <cofactor evidence="1">
        <name>Ni(2+)</name>
        <dbReference type="ChEBI" id="CHEBI:49786"/>
    </cofactor>
    <text evidence="1">Nickel for phosphatase activity.</text>
</comment>
<comment type="subunit">
    <text evidence="1">Monomer. Can also form homodimers and oligomers.</text>
</comment>
<comment type="domain">
    <text evidence="1">Comprises two domains: an N-terminal domain containing the nucleotidyltransferase activity and a C-terminal HD domain associated with both phosphodiesterase and phosphatase activities.</text>
</comment>
<comment type="miscellaneous">
    <text evidence="1">A single active site specifically recognizes both ATP and CTP and is responsible for their addition.</text>
</comment>
<comment type="similarity">
    <text evidence="1">Belongs to the tRNA nucleotidyltransferase/poly(A) polymerase family. Bacterial CCA-adding enzyme type 1 subfamily.</text>
</comment>
<protein>
    <recommendedName>
        <fullName evidence="1">Multifunctional CCA protein</fullName>
    </recommendedName>
    <domain>
        <recommendedName>
            <fullName evidence="1">CCA-adding enzyme</fullName>
            <ecNumber evidence="1">2.7.7.72</ecNumber>
        </recommendedName>
        <alternativeName>
            <fullName evidence="1">CCA tRNA nucleotidyltransferase</fullName>
        </alternativeName>
        <alternativeName>
            <fullName evidence="1">tRNA CCA-pyrophosphorylase</fullName>
        </alternativeName>
        <alternativeName>
            <fullName evidence="1">tRNA adenylyl-/cytidylyl-transferase</fullName>
        </alternativeName>
        <alternativeName>
            <fullName evidence="1">tRNA nucleotidyltransferase</fullName>
        </alternativeName>
        <alternativeName>
            <fullName evidence="1">tRNA-NT</fullName>
        </alternativeName>
    </domain>
    <domain>
        <recommendedName>
            <fullName evidence="1">2'-nucleotidase</fullName>
            <ecNumber evidence="1">3.1.3.-</ecNumber>
        </recommendedName>
    </domain>
    <domain>
        <recommendedName>
            <fullName evidence="1">2',3'-cyclic phosphodiesterase</fullName>
            <ecNumber evidence="1">3.1.4.-</ecNumber>
        </recommendedName>
    </domain>
    <domain>
        <recommendedName>
            <fullName evidence="1">Phosphatase</fullName>
            <ecNumber evidence="1">3.1.3.-</ecNumber>
        </recommendedName>
    </domain>
</protein>
<evidence type="ECO:0000255" key="1">
    <source>
        <dbReference type="HAMAP-Rule" id="MF_01261"/>
    </source>
</evidence>
<evidence type="ECO:0000256" key="2">
    <source>
        <dbReference type="SAM" id="MobiDB-lite"/>
    </source>
</evidence>
<reference key="1">
    <citation type="journal article" date="2005" name="Nucleic Acids Res.">
        <title>Genomic blueprint of Hahella chejuensis, a marine microbe producing an algicidal agent.</title>
        <authorList>
            <person name="Jeong H."/>
            <person name="Yim J.H."/>
            <person name="Lee C."/>
            <person name="Choi S.-H."/>
            <person name="Park Y.K."/>
            <person name="Yoon S.H."/>
            <person name="Hur C.-G."/>
            <person name="Kang H.-Y."/>
            <person name="Kim D."/>
            <person name="Lee H.H."/>
            <person name="Park K.H."/>
            <person name="Park S.-H."/>
            <person name="Park H.-S."/>
            <person name="Lee H.K."/>
            <person name="Oh T.K."/>
            <person name="Kim J.F."/>
        </authorList>
    </citation>
    <scope>NUCLEOTIDE SEQUENCE [LARGE SCALE GENOMIC DNA]</scope>
    <source>
        <strain>KCTC 2396</strain>
    </source>
</reference>